<gene>
    <name type="primary">arcC1</name>
    <name type="ordered locus">SAUSA300_1063</name>
</gene>
<name>ARCC1_STAA3</name>
<comment type="catalytic activity">
    <reaction>
        <text>hydrogencarbonate + NH4(+) + ATP = carbamoyl phosphate + ADP + H2O + H(+)</text>
        <dbReference type="Rhea" id="RHEA:10152"/>
        <dbReference type="ChEBI" id="CHEBI:15377"/>
        <dbReference type="ChEBI" id="CHEBI:15378"/>
        <dbReference type="ChEBI" id="CHEBI:17544"/>
        <dbReference type="ChEBI" id="CHEBI:28938"/>
        <dbReference type="ChEBI" id="CHEBI:30616"/>
        <dbReference type="ChEBI" id="CHEBI:58228"/>
        <dbReference type="ChEBI" id="CHEBI:456216"/>
        <dbReference type="EC" id="2.7.2.2"/>
    </reaction>
</comment>
<comment type="pathway">
    <text>Metabolic intermediate metabolism; carbamoyl phosphate degradation; CO(2) and NH(3) from carbamoyl phosphate: step 1/1.</text>
</comment>
<comment type="subcellular location">
    <subcellularLocation>
        <location evidence="1">Cytoplasm</location>
    </subcellularLocation>
</comment>
<comment type="similarity">
    <text evidence="1">Belongs to the carbamate kinase family.</text>
</comment>
<accession>Q2FHR7</accession>
<reference key="1">
    <citation type="journal article" date="2006" name="Lancet">
        <title>Complete genome sequence of USA300, an epidemic clone of community-acquired meticillin-resistant Staphylococcus aureus.</title>
        <authorList>
            <person name="Diep B.A."/>
            <person name="Gill S.R."/>
            <person name="Chang R.F."/>
            <person name="Phan T.H."/>
            <person name="Chen J.H."/>
            <person name="Davidson M.G."/>
            <person name="Lin F."/>
            <person name="Lin J."/>
            <person name="Carleton H.A."/>
            <person name="Mongodin E.F."/>
            <person name="Sensabaugh G.F."/>
            <person name="Perdreau-Remington F."/>
        </authorList>
    </citation>
    <scope>NUCLEOTIDE SEQUENCE [LARGE SCALE GENOMIC DNA]</scope>
    <source>
        <strain>USA300</strain>
    </source>
</reference>
<evidence type="ECO:0000305" key="1"/>
<keyword id="KW-0056">Arginine metabolism</keyword>
<keyword id="KW-0067">ATP-binding</keyword>
<keyword id="KW-0963">Cytoplasm</keyword>
<keyword id="KW-0418">Kinase</keyword>
<keyword id="KW-0547">Nucleotide-binding</keyword>
<keyword id="KW-0808">Transferase</keyword>
<sequence length="310" mass="33596">MAKIVVALGGNALGKSPQEQLELVKNTAKSLVGLITKGHEIVISHGNGPQVGSINLGLNYAAEHNQGPAFPFAECGAMSQAYIGYQLQESLQNELHSIGMDKQVVTLVTQVEVDENDPAFNNPSKPIGLFYNKEEAEQIQKEKGFIFVEDAGRGYRRVVPSPQPISIIELESIKTLIKNDTLVIAAGGGGIPVIREQHDGFKGIDAVIDKDKTSALLGANIQCDQLIILTAIDYVYINFNTENQQPLKTTNVDELKRYIDENQFAKGSMLPKIEAAISFIENNPKGSVLITSLNELDAALEGKVGTVIKK</sequence>
<organism>
    <name type="scientific">Staphylococcus aureus (strain USA300)</name>
    <dbReference type="NCBI Taxonomy" id="367830"/>
    <lineage>
        <taxon>Bacteria</taxon>
        <taxon>Bacillati</taxon>
        <taxon>Bacillota</taxon>
        <taxon>Bacilli</taxon>
        <taxon>Bacillales</taxon>
        <taxon>Staphylococcaceae</taxon>
        <taxon>Staphylococcus</taxon>
    </lineage>
</organism>
<proteinExistence type="inferred from homology"/>
<feature type="chain" id="PRO_0000269241" description="Carbamate kinase 1">
    <location>
        <begin position="1"/>
        <end position="310"/>
    </location>
</feature>
<dbReference type="EC" id="2.7.2.2"/>
<dbReference type="EMBL" id="CP000255">
    <property type="protein sequence ID" value="ABD21852.1"/>
    <property type="molecule type" value="Genomic_DNA"/>
</dbReference>
<dbReference type="SMR" id="Q2FHR7"/>
<dbReference type="KEGG" id="saa:SAUSA300_1063"/>
<dbReference type="HOGENOM" id="CLU_076278_0_0_9"/>
<dbReference type="OMA" id="DWCGAQT"/>
<dbReference type="UniPathway" id="UPA00996">
    <property type="reaction ID" value="UER00366"/>
</dbReference>
<dbReference type="Proteomes" id="UP000001939">
    <property type="component" value="Chromosome"/>
</dbReference>
<dbReference type="GO" id="GO:0005829">
    <property type="term" value="C:cytosol"/>
    <property type="evidence" value="ECO:0007669"/>
    <property type="project" value="TreeGrafter"/>
</dbReference>
<dbReference type="GO" id="GO:0005524">
    <property type="term" value="F:ATP binding"/>
    <property type="evidence" value="ECO:0007669"/>
    <property type="project" value="UniProtKB-KW"/>
</dbReference>
<dbReference type="GO" id="GO:0008804">
    <property type="term" value="F:carbamate kinase activity"/>
    <property type="evidence" value="ECO:0007669"/>
    <property type="project" value="UniProtKB-EC"/>
</dbReference>
<dbReference type="GO" id="GO:0019546">
    <property type="term" value="P:arginine deiminase pathway"/>
    <property type="evidence" value="ECO:0007669"/>
    <property type="project" value="TreeGrafter"/>
</dbReference>
<dbReference type="CDD" id="cd04235">
    <property type="entry name" value="AAK_CK"/>
    <property type="match status" value="1"/>
</dbReference>
<dbReference type="FunFam" id="3.40.1160.10:FF:000007">
    <property type="entry name" value="Carbamate kinase"/>
    <property type="match status" value="1"/>
</dbReference>
<dbReference type="Gene3D" id="3.40.1160.10">
    <property type="entry name" value="Acetylglutamate kinase-like"/>
    <property type="match status" value="1"/>
</dbReference>
<dbReference type="InterPro" id="IPR036393">
    <property type="entry name" value="AceGlu_kinase-like_sf"/>
</dbReference>
<dbReference type="InterPro" id="IPR001048">
    <property type="entry name" value="Asp/Glu/Uridylate_kinase"/>
</dbReference>
<dbReference type="InterPro" id="IPR003964">
    <property type="entry name" value="Carb_kinase"/>
</dbReference>
<dbReference type="NCBIfam" id="TIGR00746">
    <property type="entry name" value="arcC"/>
    <property type="match status" value="1"/>
</dbReference>
<dbReference type="NCBIfam" id="NF009007">
    <property type="entry name" value="PRK12352.1"/>
    <property type="match status" value="1"/>
</dbReference>
<dbReference type="PANTHER" id="PTHR30409">
    <property type="entry name" value="CARBAMATE KINASE"/>
    <property type="match status" value="1"/>
</dbReference>
<dbReference type="PANTHER" id="PTHR30409:SF1">
    <property type="entry name" value="CARBAMATE KINASE-RELATED"/>
    <property type="match status" value="1"/>
</dbReference>
<dbReference type="Pfam" id="PF00696">
    <property type="entry name" value="AA_kinase"/>
    <property type="match status" value="1"/>
</dbReference>
<dbReference type="PIRSF" id="PIRSF000723">
    <property type="entry name" value="Carbamate_kin"/>
    <property type="match status" value="1"/>
</dbReference>
<dbReference type="PRINTS" id="PR01469">
    <property type="entry name" value="CARBMTKINASE"/>
</dbReference>
<dbReference type="SUPFAM" id="SSF53633">
    <property type="entry name" value="Carbamate kinase-like"/>
    <property type="match status" value="1"/>
</dbReference>
<protein>
    <recommendedName>
        <fullName>Carbamate kinase 1</fullName>
        <ecNumber>2.7.2.2</ecNumber>
    </recommendedName>
</protein>